<accession>P0DQY0</accession>
<sequence>YCCHPACGPNFSC</sequence>
<evidence type="ECO:0000250" key="1">
    <source>
        <dbReference type="UniProtKB" id="P56973"/>
    </source>
</evidence>
<evidence type="ECO:0000269" key="2">
    <source>
    </source>
</evidence>
<evidence type="ECO:0000303" key="3">
    <source>
    </source>
</evidence>
<evidence type="ECO:0000305" key="4"/>
<evidence type="ECO:0000305" key="5">
    <source>
    </source>
</evidence>
<comment type="function">
    <text evidence="2">Alpha-conotoxins act on postsynaptic membranes, they bind to the nicotinic acetylcholine receptors (nAChR) and thus inhibit them. This toxin inhibits fetal and adult muscle-type nAChR (IC(50)=52.1 nM towards alpha-1-beta-1-gamma-delta/CHRNA1-CHRNB1-CHRNG-CHRND, and IC(50)=102.8 nM towards alpha-1-beta-1-delta-epsilon/CHRNA1-CHRNB1-CHRND-CHRNE). Shows potent activity on the synthetic AChR alpha-1-beta-1-delta/CHRNA1-CHRNB1-CHRND (IC(50)=16.9 nM).</text>
</comment>
<comment type="subcellular location">
    <subcellularLocation>
        <location evidence="2">Secreted</location>
    </subcellularLocation>
</comment>
<comment type="tissue specificity">
    <text evidence="5">Expressed by the venom duct.</text>
</comment>
<comment type="domain">
    <text evidence="5">The cysteine framework is I (CC-C-C). Alpha3/5 pattern.</text>
</comment>
<comment type="mass spectrometry"/>
<comment type="toxic dose">
    <text evidence="2">LD(50) is 2.4 nM/g by intramuscular injection into fish (Poecilia reticulata).</text>
</comment>
<comment type="miscellaneous">
    <text evidence="2">Five analogs with residue replacement and/or modifications (hydroxylation or bromination) have been synthesized. Four of them show decrease in both ability to inhibit acetylcholine receptors, and lethality towards fish.</text>
</comment>
<comment type="miscellaneous">
    <text evidence="2">Negative results: does not show activity on human neuronal nACHR alpha-3-beta-2/CHRNA3-CHRNB2, alpha-4-beta-2/CHRNA4-CHRNB2, alpha-4-beta-4/CHRNA4-CHRNB4, alpha-7/CHRNA7, and alpha-9-alpha-10/CHRNA9-CHRNA10. Does not show activity on the synthetic AChR alpha-1-beta-1-gamma/CHRNA1-CHRNB1-CHRNG (IC(50)&gt;10 uM).</text>
</comment>
<comment type="similarity">
    <text evidence="4">Belongs to the conotoxin A superfamily.</text>
</comment>
<organism>
    <name type="scientific">Conus obscurus</name>
    <name type="common">Obscure cone</name>
    <name type="synonym">Conus halitropus</name>
    <dbReference type="NCBI Taxonomy" id="89447"/>
    <lineage>
        <taxon>Eukaryota</taxon>
        <taxon>Metazoa</taxon>
        <taxon>Spiralia</taxon>
        <taxon>Lophotrochozoa</taxon>
        <taxon>Mollusca</taxon>
        <taxon>Gastropoda</taxon>
        <taxon>Caenogastropoda</taxon>
        <taxon>Neogastropoda</taxon>
        <taxon>Conoidea</taxon>
        <taxon>Conidae</taxon>
        <taxon>Conus</taxon>
        <taxon>Gastridium</taxon>
    </lineage>
</organism>
<protein>
    <recommendedName>
        <fullName evidence="3">Alpha-conotoxin OI</fullName>
    </recommendedName>
    <alternativeName>
        <fullName evidence="4">Alpha-conotoxin OIA</fullName>
    </alternativeName>
</protein>
<keyword id="KW-0008">Acetylcholine receptor inhibiting toxin</keyword>
<keyword id="KW-0027">Amidation</keyword>
<keyword id="KW-0903">Direct protein sequencing</keyword>
<keyword id="KW-1015">Disulfide bond</keyword>
<keyword id="KW-0528">Neurotoxin</keyword>
<keyword id="KW-0629">Postsynaptic neurotoxin</keyword>
<keyword id="KW-0964">Secreted</keyword>
<keyword id="KW-0800">Toxin</keyword>
<name>CA1A_CONOB</name>
<reference key="1">
    <citation type="journal article" date="2022" name="Int. J. Mol. Sci.">
        <title>Research into the bioengineering of a novel alpha-conotoxin from the milked venom of Conus obscurus.</title>
        <authorList>
            <person name="Wiere S."/>
            <person name="Sugai C."/>
            <person name="Espiritu M.J."/>
            <person name="Aurelio V.P."/>
            <person name="Reyes C.D."/>
            <person name="Yuzon N."/>
            <person name="Whittal R.M."/>
            <person name="Tytgat J."/>
            <person name="Peigneur S."/>
            <person name="Bingham J.P."/>
        </authorList>
    </citation>
    <scope>PROTEIN SEQUENCE</scope>
    <scope>FUNCTION</scope>
    <scope>AMIDATION AT CYS-13</scope>
    <scope>SUBCELLULAR LOCATION</scope>
    <scope>MASS SPECTROMETRY</scope>
    <scope>MUTAGENESIS OF PRO-9</scope>
    <scope>TOXIC DOSE</scope>
    <source>
        <tissue>Venom</tissue>
    </source>
</reference>
<proteinExistence type="evidence at protein level"/>
<feature type="peptide" id="PRO_0000457918" description="Alpha-conotoxin OI" evidence="2">
    <location>
        <begin position="1"/>
        <end position="13"/>
    </location>
</feature>
<feature type="modified residue" description="Cysteine amide" evidence="2">
    <location>
        <position position="13"/>
    </location>
</feature>
<feature type="disulfide bond" evidence="1">
    <location>
        <begin position="2"/>
        <end position="7"/>
    </location>
</feature>
<feature type="disulfide bond" evidence="1">
    <location>
        <begin position="3"/>
        <end position="13"/>
    </location>
</feature>
<feature type="mutagenesis site" description="Increase in inhibition potency towards fetal muscle-type nAChR (3-fold) and adult nAChR (4-fold). Increase in lethality towards fish (3.4-fold)." evidence="2">
    <original>P</original>
    <variation>K</variation>
    <location>
        <position position="9"/>
    </location>
</feature>
<dbReference type="GO" id="GO:0005576">
    <property type="term" value="C:extracellular region"/>
    <property type="evidence" value="ECO:0007669"/>
    <property type="project" value="UniProtKB-SubCell"/>
</dbReference>
<dbReference type="GO" id="GO:0035792">
    <property type="term" value="C:host cell postsynaptic membrane"/>
    <property type="evidence" value="ECO:0007669"/>
    <property type="project" value="UniProtKB-KW"/>
</dbReference>
<dbReference type="GO" id="GO:0030550">
    <property type="term" value="F:acetylcholine receptor inhibitor activity"/>
    <property type="evidence" value="ECO:0007669"/>
    <property type="project" value="UniProtKB-KW"/>
</dbReference>
<dbReference type="GO" id="GO:0090729">
    <property type="term" value="F:toxin activity"/>
    <property type="evidence" value="ECO:0007669"/>
    <property type="project" value="UniProtKB-KW"/>
</dbReference>
<dbReference type="InterPro" id="IPR018072">
    <property type="entry name" value="Conotoxin_a-typ_CS"/>
</dbReference>
<dbReference type="PROSITE" id="PS60014">
    <property type="entry name" value="ALPHA_CONOTOXIN"/>
    <property type="match status" value="1"/>
</dbReference>